<accession>O60503</accession>
<accession>A7E2V5</accession>
<accession>A7E2X2</accession>
<accession>D3DUD1</accession>
<accession>O60273</accession>
<accession>Q4ZHT9</accession>
<accession>Q4ZIR5</accession>
<accession>Q9BWT4</accession>
<accession>Q9UGP2</accession>
<protein>
    <recommendedName>
        <fullName evidence="15">Adenylate cyclase type 9</fullName>
        <ecNumber evidence="7 8 10 12">4.6.1.1</ecNumber>
    </recommendedName>
    <alternativeName>
        <fullName>ATP pyrophosphate-lyase 9</fullName>
    </alternativeName>
    <alternativeName>
        <fullName evidence="13">Adenylate cyclase type IX</fullName>
        <shortName evidence="13">ACIX</shortName>
    </alternativeName>
    <alternativeName>
        <fullName>Adenylyl cyclase 9</fullName>
        <shortName evidence="14">AC9</shortName>
    </alternativeName>
</protein>
<organism>
    <name type="scientific">Homo sapiens</name>
    <name type="common">Human</name>
    <dbReference type="NCBI Taxonomy" id="9606"/>
    <lineage>
        <taxon>Eukaryota</taxon>
        <taxon>Metazoa</taxon>
        <taxon>Chordata</taxon>
        <taxon>Craniata</taxon>
        <taxon>Vertebrata</taxon>
        <taxon>Euteleostomi</taxon>
        <taxon>Mammalia</taxon>
        <taxon>Eutheria</taxon>
        <taxon>Euarchontoglires</taxon>
        <taxon>Primates</taxon>
        <taxon>Haplorrhini</taxon>
        <taxon>Catarrhini</taxon>
        <taxon>Hominidae</taxon>
        <taxon>Homo</taxon>
    </lineage>
</organism>
<evidence type="ECO:0000250" key="1">
    <source>
        <dbReference type="UniProtKB" id="P26769"/>
    </source>
</evidence>
<evidence type="ECO:0000250" key="2">
    <source>
        <dbReference type="UniProtKB" id="P30803"/>
    </source>
</evidence>
<evidence type="ECO:0000250" key="3">
    <source>
        <dbReference type="UniProtKB" id="P51830"/>
    </source>
</evidence>
<evidence type="ECO:0000255" key="4"/>
<evidence type="ECO:0000255" key="5">
    <source>
        <dbReference type="PROSITE-ProRule" id="PRU00099"/>
    </source>
</evidence>
<evidence type="ECO:0000256" key="6">
    <source>
        <dbReference type="SAM" id="MobiDB-lite"/>
    </source>
</evidence>
<evidence type="ECO:0000269" key="7">
    <source>
    </source>
</evidence>
<evidence type="ECO:0000269" key="8">
    <source>
    </source>
</evidence>
<evidence type="ECO:0000269" key="9">
    <source>
    </source>
</evidence>
<evidence type="ECO:0000269" key="10">
    <source>
    </source>
</evidence>
<evidence type="ECO:0000269" key="11">
    <source>
    </source>
</evidence>
<evidence type="ECO:0000269" key="12">
    <source>
    </source>
</evidence>
<evidence type="ECO:0000303" key="13">
    <source>
    </source>
</evidence>
<evidence type="ECO:0000303" key="14">
    <source>
    </source>
</evidence>
<evidence type="ECO:0000303" key="15">
    <source>
    </source>
</evidence>
<evidence type="ECO:0000305" key="16"/>
<evidence type="ECO:0007744" key="17">
    <source>
    </source>
</evidence>
<evidence type="ECO:0007744" key="18">
    <source>
    </source>
</evidence>
<evidence type="ECO:0007744" key="19">
    <source>
    </source>
</evidence>
<evidence type="ECO:0007744" key="20">
    <source>
    </source>
</evidence>
<dbReference type="EC" id="4.6.1.1" evidence="7 8 10 12"/>
<dbReference type="EMBL" id="AF036927">
    <property type="protein sequence ID" value="AAC24201.1"/>
    <property type="status" value="ALT_FRAME"/>
    <property type="molecule type" value="mRNA"/>
</dbReference>
<dbReference type="EMBL" id="DQ008441">
    <property type="protein sequence ID" value="AAY27880.1"/>
    <property type="molecule type" value="mRNA"/>
</dbReference>
<dbReference type="EMBL" id="DQ005545">
    <property type="protein sequence ID" value="AAY21237.1"/>
    <property type="molecule type" value="mRNA"/>
</dbReference>
<dbReference type="EMBL" id="AJ133123">
    <property type="protein sequence ID" value="CAB65084.1"/>
    <property type="molecule type" value="mRNA"/>
</dbReference>
<dbReference type="EMBL" id="AY028959">
    <property type="protein sequence ID" value="AAK29464.1"/>
    <property type="molecule type" value="Genomic_DNA"/>
</dbReference>
<dbReference type="EMBL" id="AY028949">
    <property type="protein sequence ID" value="AAK29464.1"/>
    <property type="status" value="JOINED"/>
    <property type="molecule type" value="Genomic_DNA"/>
</dbReference>
<dbReference type="EMBL" id="AY028950">
    <property type="protein sequence ID" value="AAK29464.1"/>
    <property type="status" value="JOINED"/>
    <property type="molecule type" value="Genomic_DNA"/>
</dbReference>
<dbReference type="EMBL" id="AY028951">
    <property type="protein sequence ID" value="AAK29464.1"/>
    <property type="status" value="JOINED"/>
    <property type="molecule type" value="Genomic_DNA"/>
</dbReference>
<dbReference type="EMBL" id="AY028952">
    <property type="protein sequence ID" value="AAK29464.1"/>
    <property type="status" value="JOINED"/>
    <property type="molecule type" value="Genomic_DNA"/>
</dbReference>
<dbReference type="EMBL" id="AY028953">
    <property type="protein sequence ID" value="AAK29464.1"/>
    <property type="status" value="JOINED"/>
    <property type="molecule type" value="Genomic_DNA"/>
</dbReference>
<dbReference type="EMBL" id="AY028954">
    <property type="protein sequence ID" value="AAK29464.1"/>
    <property type="status" value="JOINED"/>
    <property type="molecule type" value="Genomic_DNA"/>
</dbReference>
<dbReference type="EMBL" id="AY028955">
    <property type="protein sequence ID" value="AAK29464.1"/>
    <property type="status" value="JOINED"/>
    <property type="molecule type" value="Genomic_DNA"/>
</dbReference>
<dbReference type="EMBL" id="AY028956">
    <property type="protein sequence ID" value="AAK29464.1"/>
    <property type="status" value="JOINED"/>
    <property type="molecule type" value="Genomic_DNA"/>
</dbReference>
<dbReference type="EMBL" id="AY028957">
    <property type="protein sequence ID" value="AAK29464.1"/>
    <property type="status" value="JOINED"/>
    <property type="molecule type" value="Genomic_DNA"/>
</dbReference>
<dbReference type="EMBL" id="AB011092">
    <property type="protein sequence ID" value="BAA25446.3"/>
    <property type="status" value="ALT_INIT"/>
    <property type="molecule type" value="mRNA"/>
</dbReference>
<dbReference type="EMBL" id="CH471112">
    <property type="protein sequence ID" value="EAW85331.1"/>
    <property type="molecule type" value="Genomic_DNA"/>
</dbReference>
<dbReference type="EMBL" id="CH471112">
    <property type="protein sequence ID" value="EAW85332.1"/>
    <property type="molecule type" value="Genomic_DNA"/>
</dbReference>
<dbReference type="EMBL" id="BC136657">
    <property type="protein sequence ID" value="AAI36658.1"/>
    <property type="molecule type" value="mRNA"/>
</dbReference>
<dbReference type="EMBL" id="BC136658">
    <property type="protein sequence ID" value="AAI36659.1"/>
    <property type="molecule type" value="mRNA"/>
</dbReference>
<dbReference type="EMBL" id="BC151207">
    <property type="protein sequence ID" value="AAI51208.1"/>
    <property type="molecule type" value="mRNA"/>
</dbReference>
<dbReference type="EMBL" id="BC151229">
    <property type="protein sequence ID" value="AAI51230.1"/>
    <property type="molecule type" value="mRNA"/>
</dbReference>
<dbReference type="CCDS" id="CCDS32382.1"/>
<dbReference type="RefSeq" id="NP_001107.2">
    <property type="nucleotide sequence ID" value="NM_001116.4"/>
</dbReference>
<dbReference type="SMR" id="O60503"/>
<dbReference type="BioGRID" id="106628">
    <property type="interactions" value="161"/>
</dbReference>
<dbReference type="FunCoup" id="O60503">
    <property type="interactions" value="2250"/>
</dbReference>
<dbReference type="IntAct" id="O60503">
    <property type="interactions" value="59"/>
</dbReference>
<dbReference type="MINT" id="O60503"/>
<dbReference type="STRING" id="9606.ENSP00000294016"/>
<dbReference type="BindingDB" id="O60503"/>
<dbReference type="ChEMBL" id="CHEMBL2655"/>
<dbReference type="DrugBank" id="DB02587">
    <property type="generic name" value="Colforsin"/>
</dbReference>
<dbReference type="GlyCosmos" id="O60503">
    <property type="glycosylation" value="3 sites, No reported glycans"/>
</dbReference>
<dbReference type="GlyGen" id="O60503">
    <property type="glycosylation" value="4 sites, 2 N-linked glycans (2 sites), 1 O-linked glycan (1 site)"/>
</dbReference>
<dbReference type="iPTMnet" id="O60503"/>
<dbReference type="PhosphoSitePlus" id="O60503"/>
<dbReference type="SwissPalm" id="O60503"/>
<dbReference type="BioMuta" id="ADCY9"/>
<dbReference type="CPTAC" id="CPTAC-1229"/>
<dbReference type="CPTAC" id="CPTAC-1230"/>
<dbReference type="jPOST" id="O60503"/>
<dbReference type="MassIVE" id="O60503"/>
<dbReference type="PaxDb" id="9606-ENSP00000294016"/>
<dbReference type="PeptideAtlas" id="O60503"/>
<dbReference type="ProteomicsDB" id="49441"/>
<dbReference type="Pumba" id="O60503"/>
<dbReference type="Antibodypedia" id="55436">
    <property type="antibodies" value="243 antibodies from 31 providers"/>
</dbReference>
<dbReference type="DNASU" id="115"/>
<dbReference type="Ensembl" id="ENST00000294016.8">
    <property type="protein sequence ID" value="ENSP00000294016.3"/>
    <property type="gene ID" value="ENSG00000162104.10"/>
</dbReference>
<dbReference type="GeneID" id="115"/>
<dbReference type="KEGG" id="hsa:115"/>
<dbReference type="MANE-Select" id="ENST00000294016.8">
    <property type="protein sequence ID" value="ENSP00000294016.3"/>
    <property type="RefSeq nucleotide sequence ID" value="NM_001116.4"/>
    <property type="RefSeq protein sequence ID" value="NP_001107.2"/>
</dbReference>
<dbReference type="UCSC" id="uc002cvx.4">
    <property type="organism name" value="human"/>
</dbReference>
<dbReference type="AGR" id="HGNC:240"/>
<dbReference type="CTD" id="115"/>
<dbReference type="DisGeNET" id="115"/>
<dbReference type="GeneCards" id="ADCY9"/>
<dbReference type="HGNC" id="HGNC:240">
    <property type="gene designation" value="ADCY9"/>
</dbReference>
<dbReference type="HPA" id="ENSG00000162104">
    <property type="expression patterns" value="Tissue enhanced (skeletal)"/>
</dbReference>
<dbReference type="MIM" id="603302">
    <property type="type" value="gene"/>
</dbReference>
<dbReference type="neXtProt" id="NX_O60503"/>
<dbReference type="OpenTargets" id="ENSG00000162104"/>
<dbReference type="PharmGKB" id="PA30"/>
<dbReference type="VEuPathDB" id="HostDB:ENSG00000162104"/>
<dbReference type="eggNOG" id="KOG3618">
    <property type="taxonomic scope" value="Eukaryota"/>
</dbReference>
<dbReference type="GeneTree" id="ENSGT00940000155577"/>
<dbReference type="HOGENOM" id="CLU_001072_12_0_1"/>
<dbReference type="InParanoid" id="O60503"/>
<dbReference type="OMA" id="FTAMPPG"/>
<dbReference type="OrthoDB" id="60033at2759"/>
<dbReference type="PAN-GO" id="O60503">
    <property type="GO annotations" value="3 GO annotations based on evolutionary models"/>
</dbReference>
<dbReference type="PhylomeDB" id="O60503"/>
<dbReference type="TreeFam" id="TF313845"/>
<dbReference type="PathwayCommons" id="O60503"/>
<dbReference type="Reactome" id="R-HSA-163359">
    <property type="pathway name" value="Glucagon signaling in metabolic regulation"/>
</dbReference>
<dbReference type="Reactome" id="R-HSA-163615">
    <property type="pathway name" value="PKA activation"/>
</dbReference>
<dbReference type="Reactome" id="R-HSA-164378">
    <property type="pathway name" value="PKA activation in glucagon signalling"/>
</dbReference>
<dbReference type="Reactome" id="R-HSA-170660">
    <property type="pathway name" value="Adenylate cyclase activating pathway"/>
</dbReference>
<dbReference type="Reactome" id="R-HSA-170670">
    <property type="pathway name" value="Adenylate cyclase inhibitory pathway"/>
</dbReference>
<dbReference type="Reactome" id="R-HSA-418555">
    <property type="pathway name" value="G alpha (s) signalling events"/>
</dbReference>
<dbReference type="Reactome" id="R-HSA-418594">
    <property type="pathway name" value="G alpha (i) signalling events"/>
</dbReference>
<dbReference type="Reactome" id="R-HSA-418597">
    <property type="pathway name" value="G alpha (z) signalling events"/>
</dbReference>
<dbReference type="Reactome" id="R-HSA-432040">
    <property type="pathway name" value="Vasopressin regulates renal water homeostasis via Aquaporins"/>
</dbReference>
<dbReference type="Reactome" id="R-HSA-5610787">
    <property type="pathway name" value="Hedgehog 'off' state"/>
</dbReference>
<dbReference type="Reactome" id="R-HSA-9634597">
    <property type="pathway name" value="GPER1 signaling"/>
</dbReference>
<dbReference type="Reactome" id="R-HSA-9660821">
    <property type="pathway name" value="ADORA2B mediated anti-inflammatory cytokines production"/>
</dbReference>
<dbReference type="Reactome" id="R-HSA-9664323">
    <property type="pathway name" value="FCGR3A-mediated IL10 synthesis"/>
</dbReference>
<dbReference type="Reactome" id="R-HSA-9856530">
    <property type="pathway name" value="High laminar flow shear stress activates signaling by PIEZO1 and PECAM1:CDH5:KDR in endothelial cells"/>
</dbReference>
<dbReference type="SignaLink" id="O60503"/>
<dbReference type="SIGNOR" id="O60503"/>
<dbReference type="BioGRID-ORCS" id="115">
    <property type="hits" value="17 hits in 1151 CRISPR screens"/>
</dbReference>
<dbReference type="ChiTaRS" id="ADCY9">
    <property type="organism name" value="human"/>
</dbReference>
<dbReference type="GeneWiki" id="ADCY9"/>
<dbReference type="GenomeRNAi" id="115"/>
<dbReference type="Pharos" id="O60503">
    <property type="development level" value="Tbio"/>
</dbReference>
<dbReference type="PRO" id="PR:O60503"/>
<dbReference type="Proteomes" id="UP000005640">
    <property type="component" value="Chromosome 16"/>
</dbReference>
<dbReference type="RNAct" id="O60503">
    <property type="molecule type" value="protein"/>
</dbReference>
<dbReference type="Bgee" id="ENSG00000162104">
    <property type="expression patterns" value="Expressed in secondary oocyte and 201 other cell types or tissues"/>
</dbReference>
<dbReference type="ExpressionAtlas" id="O60503">
    <property type="expression patterns" value="baseline and differential"/>
</dbReference>
<dbReference type="GO" id="GO:0030424">
    <property type="term" value="C:axon"/>
    <property type="evidence" value="ECO:0007669"/>
    <property type="project" value="Ensembl"/>
</dbReference>
<dbReference type="GO" id="GO:0036064">
    <property type="term" value="C:ciliary basal body"/>
    <property type="evidence" value="ECO:0000314"/>
    <property type="project" value="HPA"/>
</dbReference>
<dbReference type="GO" id="GO:0005929">
    <property type="term" value="C:cilium"/>
    <property type="evidence" value="ECO:0000314"/>
    <property type="project" value="HPA"/>
</dbReference>
<dbReference type="GO" id="GO:0005829">
    <property type="term" value="C:cytosol"/>
    <property type="evidence" value="ECO:0000314"/>
    <property type="project" value="HPA"/>
</dbReference>
<dbReference type="GO" id="GO:0030425">
    <property type="term" value="C:dendrite"/>
    <property type="evidence" value="ECO:0007669"/>
    <property type="project" value="Ensembl"/>
</dbReference>
<dbReference type="GO" id="GO:0016020">
    <property type="term" value="C:membrane"/>
    <property type="evidence" value="ECO:0000314"/>
    <property type="project" value="UniProtKB"/>
</dbReference>
<dbReference type="GO" id="GO:0005886">
    <property type="term" value="C:plasma membrane"/>
    <property type="evidence" value="ECO:0000314"/>
    <property type="project" value="UniProtKB"/>
</dbReference>
<dbReference type="GO" id="GO:0004016">
    <property type="term" value="F:adenylate cyclase activity"/>
    <property type="evidence" value="ECO:0000314"/>
    <property type="project" value="UniProtKB"/>
</dbReference>
<dbReference type="GO" id="GO:0005524">
    <property type="term" value="F:ATP binding"/>
    <property type="evidence" value="ECO:0007669"/>
    <property type="project" value="UniProtKB-KW"/>
</dbReference>
<dbReference type="GO" id="GO:0046872">
    <property type="term" value="F:metal ion binding"/>
    <property type="evidence" value="ECO:0007669"/>
    <property type="project" value="UniProtKB-KW"/>
</dbReference>
<dbReference type="GO" id="GO:0071880">
    <property type="term" value="P:adenylate cyclase-activating adrenergic receptor signaling pathway"/>
    <property type="evidence" value="ECO:0000315"/>
    <property type="project" value="UniProtKB"/>
</dbReference>
<dbReference type="GO" id="GO:0007189">
    <property type="term" value="P:adenylate cyclase-activating G protein-coupled receptor signaling pathway"/>
    <property type="evidence" value="ECO:0000314"/>
    <property type="project" value="UniProtKB"/>
</dbReference>
<dbReference type="GO" id="GO:0006171">
    <property type="term" value="P:cAMP biosynthetic process"/>
    <property type="evidence" value="ECO:0000314"/>
    <property type="project" value="UniProtKB"/>
</dbReference>
<dbReference type="GO" id="GO:0001701">
    <property type="term" value="P:in utero embryonic development"/>
    <property type="evidence" value="ECO:0007669"/>
    <property type="project" value="Ensembl"/>
</dbReference>
<dbReference type="GO" id="GO:0035556">
    <property type="term" value="P:intracellular signal transduction"/>
    <property type="evidence" value="ECO:0007669"/>
    <property type="project" value="InterPro"/>
</dbReference>
<dbReference type="GO" id="GO:0007165">
    <property type="term" value="P:signal transduction"/>
    <property type="evidence" value="ECO:0000304"/>
    <property type="project" value="ProtInc"/>
</dbReference>
<dbReference type="CDD" id="cd07302">
    <property type="entry name" value="CHD"/>
    <property type="match status" value="2"/>
</dbReference>
<dbReference type="FunFam" id="3.30.70.1230:FF:000008">
    <property type="entry name" value="Adenylate cyclase type 9"/>
    <property type="match status" value="1"/>
</dbReference>
<dbReference type="FunFam" id="3.30.70.1230:FF:000014">
    <property type="entry name" value="adenylate cyclase type 9"/>
    <property type="match status" value="1"/>
</dbReference>
<dbReference type="Gene3D" id="3.30.70.1230">
    <property type="entry name" value="Nucleotide cyclase"/>
    <property type="match status" value="2"/>
</dbReference>
<dbReference type="InterPro" id="IPR001054">
    <property type="entry name" value="A/G_cyclase"/>
</dbReference>
<dbReference type="InterPro" id="IPR018297">
    <property type="entry name" value="A/G_cyclase_CS"/>
</dbReference>
<dbReference type="InterPro" id="IPR029787">
    <property type="entry name" value="Nucleotide_cyclase"/>
</dbReference>
<dbReference type="PANTHER" id="PTHR45627">
    <property type="entry name" value="ADENYLATE CYCLASE TYPE 1"/>
    <property type="match status" value="1"/>
</dbReference>
<dbReference type="PANTHER" id="PTHR45627:SF8">
    <property type="entry name" value="ADENYLATE CYCLASE TYPE 9"/>
    <property type="match status" value="1"/>
</dbReference>
<dbReference type="Pfam" id="PF00211">
    <property type="entry name" value="Guanylate_cyc"/>
    <property type="match status" value="2"/>
</dbReference>
<dbReference type="SMART" id="SM00044">
    <property type="entry name" value="CYCc"/>
    <property type="match status" value="2"/>
</dbReference>
<dbReference type="SUPFAM" id="SSF55073">
    <property type="entry name" value="Nucleotide cyclase"/>
    <property type="match status" value="2"/>
</dbReference>
<dbReference type="PROSITE" id="PS00452">
    <property type="entry name" value="GUANYLATE_CYCLASE_1"/>
    <property type="match status" value="2"/>
</dbReference>
<dbReference type="PROSITE" id="PS50125">
    <property type="entry name" value="GUANYLATE_CYCLASE_2"/>
    <property type="match status" value="2"/>
</dbReference>
<sequence>MASPPHQQLLHHHSTEVSCDSSGDSNSVRVKINPKQLSSNSHPKHCKYSISSSCSSSGDSGGVPRRVGGGGRLRRQKKLPQLFERASSRWWDPKFDSVNLEEACLERCFPQTQRRFRYALFYIGFACLLWSIYFAVHMRSRLIVMVAPALCFLLVCVGFFLFTFTKLYARHYAWTSLALTLLVFALTLAAQFQVLTPVSGRGDSSNLTATARPTDTCLSQVGSFSMCIEVLFLLYTVMHLPLYLSLCLGVAYSVLFETFGYHFRDEACFPSPGAGALHWELLSRGLLHGCIHAIGVHLFVMSQVRSRSTFLKVGQSIMHGKDLEVEKALKERMIHSVMPRIIADDLMKQGDEESENSVKRHATSSPKNRKKKSSIQKAPIAFRPFKMQQIEEVSILFADIVGFTKMSANKSAHALVGLLNDLFGRFDRLCEETKCEKISTLGDCYYCVAGCPEPRADHAYCCIEMGLGMIKAIEQFCQEKKEMVNMRVGVHTGTVLCGILGMRRFKFDVWSNDVNLANLMEQLGVAGKVHISEATAKYLDDRYEMEDGKVIERLGQSVVADQLKGLKTYLISGQRAKESRCSCAEALLSGFEVIDGSQVSSGPRGQGTASSGNVSDLAQTVKTFDNLKTCPSCGITFAPKSEAGAEGGAPQNGCQDEHKNSTKASGGPNPKTQNGLLSPPQEEKLTNSQTSLCEILQEKGRWAGVSLDQSALLPLRFKNIREKTDAHFVDVIKEDSLMKDYFFKPPINQFSLNFLDQELERSYRTSYQEEVIKNSPVKTFASPTFSSLLDVFLSTTVFLTLSTTCFLKYEAATVPPPPAALAVFSAALLLEVLSLAVSIRMVFFLEDVMACTKRLLEWIAGWLPRHCIGAILVSLPALAVYSHVTSEYETNIHFPVFTGSAALIAVVHYCNFCQLSSWMRSSLATVVGAGPLLLLYVSLCPDSSVLTSPLDAVQNFSSERNPCNSSVPRDLRRPASLIGQEVVLVFFLLLLLVWFLNREFEVSYRLHYHGDVEADLHRTKIQSMRDQADWLLRNIIPYHVAEQLKVSQTYSKNHDSGGVIFASIVNFSEFYEENYEGGKECYRVLNELIGDFDELLSKPDYSSIEKIKTIGATYMAASGLNTAQAQDGSHPQEHLQILFEFAKEMMRVVDDFNNNMLWFNFKLRVGFNHGPLTAGVIGTTKLLYDIWGDTVNIASRMDTTGVECRIQVSEESYRVLSKMGYDFDYRGTVNVKGKGQMKTYLYPKCTDHRVIPQHQLSISPDIRVQVDGSIGRSPTDEIANLVPSVQYVDKTSLGSDSSTQAKDAHLSPKRPWKEPVKAEERGRFGKAIEKDDCDETGIEEANELTKLNVSKSV</sequence>
<name>ADCY9_HUMAN</name>
<proteinExistence type="evidence at protein level"/>
<keyword id="KW-0067">ATP-binding</keyword>
<keyword id="KW-0115">cAMP biosynthesis</keyword>
<keyword id="KW-1003">Cell membrane</keyword>
<keyword id="KW-0325">Glycoprotein</keyword>
<keyword id="KW-0456">Lyase</keyword>
<keyword id="KW-0460">Magnesium</keyword>
<keyword id="KW-0464">Manganese</keyword>
<keyword id="KW-0472">Membrane</keyword>
<keyword id="KW-0479">Metal-binding</keyword>
<keyword id="KW-0547">Nucleotide-binding</keyword>
<keyword id="KW-0597">Phosphoprotein</keyword>
<keyword id="KW-1267">Proteomics identification</keyword>
<keyword id="KW-1185">Reference proteome</keyword>
<keyword id="KW-0677">Repeat</keyword>
<keyword id="KW-0812">Transmembrane</keyword>
<keyword id="KW-1133">Transmembrane helix</keyword>
<reference key="1">
    <citation type="journal article" date="1998" name="Genomics">
        <title>Cloning, chromosomal mapping, and regulatory properties of the human type 9 adenylyl cyclase (ADCY9).</title>
        <authorList>
            <person name="Hacker B.M."/>
            <person name="Tomlinson J.E."/>
            <person name="Wayman G.A."/>
            <person name="Sultana R."/>
            <person name="Chan G."/>
            <person name="Villacres E."/>
            <person name="Disteche C."/>
            <person name="Storm D.R."/>
        </authorList>
    </citation>
    <scope>NUCLEOTIDE SEQUENCE [MRNA]</scope>
    <scope>CATALYTIC ACTIVITY</scope>
    <scope>FUNCTION</scope>
    <scope>ACTIVITY REGULATION</scope>
    <scope>SUBCELLULAR LOCATION</scope>
    <scope>TISSUE SPECIFICITY</scope>
    <source>
        <tissue>Heart</tissue>
    </source>
</reference>
<reference key="2">
    <citation type="journal article" date="2003" name="Pharmacogenetics">
        <title>An Ile to Met polymorphism in the catalytic domain of adenylyl cyclase type 9 confers reduced beta2-adrenergic receptor stimulation.</title>
        <authorList>
            <person name="Small K.M."/>
            <person name="Brown K.M."/>
            <person name="Theiss C.T."/>
            <person name="Seman C.A."/>
            <person name="Weiss S.T."/>
            <person name="Liggett S.B."/>
        </authorList>
    </citation>
    <scope>NUCLEOTIDE SEQUENCE [MRNA]</scope>
    <scope>FUNCTION</scope>
    <scope>CATALYTIC ACTIVITY</scope>
    <scope>TISSUE SPECIFICITY</scope>
    <scope>VARIANT MET-772</scope>
</reference>
<reference key="3">
    <citation type="journal article" date="2005" name="Hum. Mol. Genet.">
        <title>Molecular properties and pharmacogenetics of a polymorphism of adenylyl cyclase type 9 in asthma: interaction between beta-agonist and corticosteroid pathways.</title>
        <authorList>
            <person name="Tantisira K.G."/>
            <person name="Small K.M."/>
            <person name="Litonjua A.A."/>
            <person name="Weiss S.T."/>
            <person name="Liggett S.B."/>
        </authorList>
    </citation>
    <scope>NUCLEOTIDE SEQUENCE [MRNA]</scope>
    <scope>FUNCTION</scope>
    <scope>CATALYTIC ACTIVITY</scope>
    <scope>SUBCELLULAR LOCATION</scope>
    <scope>VARIANT MET-772</scope>
</reference>
<reference key="4">
    <citation type="journal article" date="2000" name="J. Neurochem.">
        <title>Characterisation of human adenylyl cyclase IX reveals inhibition by Ca(2+)/Calcineurin and differential mRNA plyadenylation.</title>
        <authorList>
            <person name="Paterson J.M."/>
            <person name="Smith S.M."/>
            <person name="Simpson J."/>
            <person name="Grace O.C."/>
            <person name="Sosunov A.A."/>
            <person name="Bell J.E."/>
            <person name="Antoni F.A."/>
        </authorList>
    </citation>
    <scope>NUCLEOTIDE SEQUENCE [MRNA]</scope>
    <scope>FUNCTION</scope>
    <scope>CATALYTIC ACTIVITY</scope>
    <scope>ACTIVITY REGULATION</scope>
    <scope>SUBCELLULAR LOCATION</scope>
    <scope>TISSUE SPECIFICITY</scope>
    <scope>VARIANT SER-1154</scope>
</reference>
<reference key="5">
    <citation type="submission" date="2001-03" db="EMBL/GenBank/DDBJ databases">
        <title>Mutation screening, case control study and transmission disequilibrium analysis of adenylate cyclase type 9 (ADCY9) gene in functional psychoses.</title>
        <authorList>
            <person name="Toyota T."/>
            <person name="Yamada K."/>
            <person name="Meerabux J."/>
            <person name="Hattori E."/>
            <person name="Saito K."/>
            <person name="Yoshitsugu K."/>
            <person name="Shimizu H."/>
            <person name="Nankai M."/>
            <person name="Toru M."/>
            <person name="Detera-Wadleigh S.D."/>
            <person name="Yoshikawa T."/>
        </authorList>
    </citation>
    <scope>NUCLEOTIDE SEQUENCE [GENOMIC DNA]</scope>
</reference>
<reference key="6">
    <citation type="journal article" date="1998" name="DNA Res.">
        <title>Prediction of the coding sequences of unidentified human genes. IX. The complete sequences of 100 new cDNA clones from brain which can code for large proteins in vitro.</title>
        <authorList>
            <person name="Nagase T."/>
            <person name="Ishikawa K."/>
            <person name="Miyajima N."/>
            <person name="Tanaka A."/>
            <person name="Kotani H."/>
            <person name="Nomura N."/>
            <person name="Ohara O."/>
        </authorList>
    </citation>
    <scope>NUCLEOTIDE SEQUENCE [LARGE SCALE MRNA]</scope>
    <scope>VARIANT SER-1154</scope>
    <source>
        <tissue>Brain</tissue>
    </source>
</reference>
<reference key="7">
    <citation type="journal article" date="2002" name="DNA Res.">
        <title>Construction of expression-ready cDNA clones for KIAA genes: manual curation of 330 KIAA cDNA clones.</title>
        <authorList>
            <person name="Nakajima D."/>
            <person name="Okazaki N."/>
            <person name="Yamakawa H."/>
            <person name="Kikuno R."/>
            <person name="Ohara O."/>
            <person name="Nagase T."/>
        </authorList>
    </citation>
    <scope>SEQUENCE REVISION</scope>
</reference>
<reference key="8">
    <citation type="submission" date="2005-08" db="EMBL/GenBank/DDBJ databases">
        <authorList>
            <person name="Ohara O."/>
            <person name="Nagase T."/>
            <person name="Kikuno R."/>
            <person name="Ishikawa K."/>
        </authorList>
    </citation>
    <scope>SEQUENCE REVISION</scope>
</reference>
<reference key="9">
    <citation type="submission" date="2005-09" db="EMBL/GenBank/DDBJ databases">
        <authorList>
            <person name="Mural R.J."/>
            <person name="Istrail S."/>
            <person name="Sutton G.G."/>
            <person name="Florea L."/>
            <person name="Halpern A.L."/>
            <person name="Mobarry C.M."/>
            <person name="Lippert R."/>
            <person name="Walenz B."/>
            <person name="Shatkay H."/>
            <person name="Dew I."/>
            <person name="Miller J.R."/>
            <person name="Flanigan M.J."/>
            <person name="Edwards N.J."/>
            <person name="Bolanos R."/>
            <person name="Fasulo D."/>
            <person name="Halldorsson B.V."/>
            <person name="Hannenhalli S."/>
            <person name="Turner R."/>
            <person name="Yooseph S."/>
            <person name="Lu F."/>
            <person name="Nusskern D.R."/>
            <person name="Shue B.C."/>
            <person name="Zheng X.H."/>
            <person name="Zhong F."/>
            <person name="Delcher A.L."/>
            <person name="Huson D.H."/>
            <person name="Kravitz S.A."/>
            <person name="Mouchard L."/>
            <person name="Reinert K."/>
            <person name="Remington K.A."/>
            <person name="Clark A.G."/>
            <person name="Waterman M.S."/>
            <person name="Eichler E.E."/>
            <person name="Adams M.D."/>
            <person name="Hunkapiller M.W."/>
            <person name="Myers E.W."/>
            <person name="Venter J.C."/>
        </authorList>
    </citation>
    <scope>NUCLEOTIDE SEQUENCE [LARGE SCALE GENOMIC DNA]</scope>
</reference>
<reference key="10">
    <citation type="journal article" date="2004" name="Genome Res.">
        <title>The status, quality, and expansion of the NIH full-length cDNA project: the Mammalian Gene Collection (MGC).</title>
        <authorList>
            <consortium name="The MGC Project Team"/>
        </authorList>
    </citation>
    <scope>NUCLEOTIDE SEQUENCE [LARGE SCALE MRNA]</scope>
    <scope>VARIANT SER-1154</scope>
</reference>
<reference key="11">
    <citation type="journal article" date="2008" name="Proc. Natl. Acad. Sci. U.S.A.">
        <title>A quantitative atlas of mitotic phosphorylation.</title>
        <authorList>
            <person name="Dephoure N."/>
            <person name="Zhou C."/>
            <person name="Villen J."/>
            <person name="Beausoleil S.A."/>
            <person name="Bakalarski C.E."/>
            <person name="Elledge S.J."/>
            <person name="Gygi S.P."/>
        </authorList>
    </citation>
    <scope>PHOSPHORYLATION [LARGE SCALE ANALYSIS] AT SER-1259</scope>
    <scope>IDENTIFICATION BY MASS SPECTROMETRY [LARGE SCALE ANALYSIS]</scope>
    <source>
        <tissue>Cervix carcinoma</tissue>
    </source>
</reference>
<reference key="12">
    <citation type="journal article" date="2010" name="Sci. Signal.">
        <title>Quantitative phosphoproteomics reveals widespread full phosphorylation site occupancy during mitosis.</title>
        <authorList>
            <person name="Olsen J.V."/>
            <person name="Vermeulen M."/>
            <person name="Santamaria A."/>
            <person name="Kumar C."/>
            <person name="Miller M.L."/>
            <person name="Jensen L.J."/>
            <person name="Gnad F."/>
            <person name="Cox J."/>
            <person name="Jensen T.S."/>
            <person name="Nigg E.A."/>
            <person name="Brunak S."/>
            <person name="Mann M."/>
        </authorList>
    </citation>
    <scope>PHOSPHORYLATION [LARGE SCALE ANALYSIS] AT SER-1307</scope>
    <scope>IDENTIFICATION BY MASS SPECTROMETRY [LARGE SCALE ANALYSIS]</scope>
    <source>
        <tissue>Cervix carcinoma</tissue>
    </source>
</reference>
<reference key="13">
    <citation type="journal article" date="2013" name="J. Proteome Res.">
        <title>Toward a comprehensive characterization of a human cancer cell phosphoproteome.</title>
        <authorList>
            <person name="Zhou H."/>
            <person name="Di Palma S."/>
            <person name="Preisinger C."/>
            <person name="Peng M."/>
            <person name="Polat A.N."/>
            <person name="Heck A.J."/>
            <person name="Mohammed S."/>
        </authorList>
    </citation>
    <scope>PHOSPHORYLATION [LARGE SCALE ANALYSIS] AT SER-1257 AND SER-1259</scope>
    <scope>IDENTIFICATION BY MASS SPECTROMETRY [LARGE SCALE ANALYSIS]</scope>
    <source>
        <tissue>Cervix carcinoma</tissue>
    </source>
</reference>
<reference key="14">
    <citation type="journal article" date="2014" name="J. Proteomics">
        <title>An enzyme assisted RP-RPLC approach for in-depth analysis of human liver phosphoproteome.</title>
        <authorList>
            <person name="Bian Y."/>
            <person name="Song C."/>
            <person name="Cheng K."/>
            <person name="Dong M."/>
            <person name="Wang F."/>
            <person name="Huang J."/>
            <person name="Sun D."/>
            <person name="Wang L."/>
            <person name="Ye M."/>
            <person name="Zou H."/>
        </authorList>
    </citation>
    <scope>PHOSPHORYLATION [LARGE SCALE ANALYSIS] AT SER-706</scope>
    <scope>IDENTIFICATION BY MASS SPECTROMETRY [LARGE SCALE ANALYSIS]</scope>
    <source>
        <tissue>Liver</tissue>
    </source>
</reference>
<gene>
    <name type="primary">ADCY9</name>
    <name type="synonym">KIAA0520</name>
</gene>
<feature type="chain" id="PRO_0000195708" description="Adenylate cyclase type 9">
    <location>
        <begin position="1"/>
        <end position="1353"/>
    </location>
</feature>
<feature type="topological domain" description="Cytoplasmic" evidence="4">
    <location>
        <begin position="1"/>
        <end position="117"/>
    </location>
</feature>
<feature type="transmembrane region" description="Helical" evidence="4">
    <location>
        <begin position="118"/>
        <end position="138"/>
    </location>
</feature>
<feature type="topological domain" description="Extracellular" evidence="4">
    <location>
        <begin position="139"/>
        <end position="141"/>
    </location>
</feature>
<feature type="transmembrane region" description="Helical" evidence="4">
    <location>
        <begin position="142"/>
        <end position="162"/>
    </location>
</feature>
<feature type="topological domain" description="Cytoplasmic" evidence="4">
    <location>
        <begin position="163"/>
        <end position="171"/>
    </location>
</feature>
<feature type="transmembrane region" description="Helical" evidence="4">
    <location>
        <begin position="172"/>
        <end position="192"/>
    </location>
</feature>
<feature type="topological domain" description="Extracellular" evidence="4">
    <location>
        <begin position="193"/>
        <end position="215"/>
    </location>
</feature>
<feature type="transmembrane region" description="Helical" evidence="4">
    <location>
        <begin position="216"/>
        <end position="235"/>
    </location>
</feature>
<feature type="topological domain" description="Cytoplasmic" evidence="4">
    <location>
        <begin position="236"/>
        <end position="241"/>
    </location>
</feature>
<feature type="transmembrane region" description="Helical" evidence="4">
    <location>
        <begin position="242"/>
        <end position="259"/>
    </location>
</feature>
<feature type="topological domain" description="Extracellular" evidence="4">
    <location>
        <begin position="260"/>
        <end position="280"/>
    </location>
</feature>
<feature type="transmembrane region" description="Helical" evidence="4">
    <location>
        <begin position="281"/>
        <end position="301"/>
    </location>
</feature>
<feature type="topological domain" description="Cytoplasmic" evidence="4">
    <location>
        <begin position="302"/>
        <end position="786"/>
    </location>
</feature>
<feature type="transmembrane region" description="Helical" evidence="4">
    <location>
        <begin position="787"/>
        <end position="807"/>
    </location>
</feature>
<feature type="topological domain" description="Extracellular" evidence="4">
    <location>
        <begin position="808"/>
        <end position="818"/>
    </location>
</feature>
<feature type="transmembrane region" description="Helical" evidence="4">
    <location>
        <begin position="819"/>
        <end position="839"/>
    </location>
</feature>
<feature type="topological domain" description="Cytoplasmic" evidence="4">
    <location>
        <begin position="840"/>
        <end position="867"/>
    </location>
</feature>
<feature type="transmembrane region" description="Helical" evidence="4">
    <location>
        <begin position="868"/>
        <end position="888"/>
    </location>
</feature>
<feature type="topological domain" description="Extracellular" evidence="4">
    <location>
        <begin position="889"/>
        <end position="891"/>
    </location>
</feature>
<feature type="transmembrane region" description="Helical" evidence="4">
    <location>
        <begin position="892"/>
        <end position="912"/>
    </location>
</feature>
<feature type="topological domain" description="Cytoplasmic" evidence="4">
    <location>
        <begin position="913"/>
        <end position="920"/>
    </location>
</feature>
<feature type="transmembrane region" description="Helical" evidence="4">
    <location>
        <begin position="921"/>
        <end position="941"/>
    </location>
</feature>
<feature type="topological domain" description="Extracellular" evidence="4">
    <location>
        <begin position="942"/>
        <end position="975"/>
    </location>
</feature>
<feature type="transmembrane region" description="Helical" evidence="4">
    <location>
        <begin position="976"/>
        <end position="996"/>
    </location>
</feature>
<feature type="topological domain" description="Cytoplasmic" evidence="4">
    <location>
        <begin position="997"/>
        <end position="1353"/>
    </location>
</feature>
<feature type="domain" description="Guanylate cyclase 1" evidence="5">
    <location>
        <begin position="394"/>
        <end position="521"/>
    </location>
</feature>
<feature type="domain" description="Guanylate cyclase 2" evidence="5">
    <location>
        <begin position="1058"/>
        <end position="1198"/>
    </location>
</feature>
<feature type="region of interest" description="Disordered" evidence="6">
    <location>
        <begin position="1"/>
        <end position="27"/>
    </location>
</feature>
<feature type="region of interest" description="Disordered" evidence="6">
    <location>
        <begin position="49"/>
        <end position="71"/>
    </location>
</feature>
<feature type="region of interest" description="Disordered" evidence="6">
    <location>
        <begin position="349"/>
        <end position="375"/>
    </location>
</feature>
<feature type="region of interest" description="Disordered" evidence="6">
    <location>
        <begin position="642"/>
        <end position="684"/>
    </location>
</feature>
<feature type="region of interest" description="Disordered" evidence="6">
    <location>
        <begin position="1292"/>
        <end position="1326"/>
    </location>
</feature>
<feature type="compositionally biased region" description="Polar residues" evidence="6">
    <location>
        <begin position="16"/>
        <end position="27"/>
    </location>
</feature>
<feature type="compositionally biased region" description="Low complexity" evidence="6">
    <location>
        <begin position="49"/>
        <end position="66"/>
    </location>
</feature>
<feature type="compositionally biased region" description="Basic residues" evidence="6">
    <location>
        <begin position="359"/>
        <end position="374"/>
    </location>
</feature>
<feature type="compositionally biased region" description="Polar residues" evidence="6">
    <location>
        <begin position="1292"/>
        <end position="1301"/>
    </location>
</feature>
<feature type="compositionally biased region" description="Basic and acidic residues" evidence="6">
    <location>
        <begin position="1302"/>
        <end position="1326"/>
    </location>
</feature>
<feature type="binding site" evidence="2">
    <location>
        <begin position="399"/>
        <end position="404"/>
    </location>
    <ligand>
        <name>ATP</name>
        <dbReference type="ChEBI" id="CHEBI:30616"/>
    </ligand>
</feature>
<feature type="binding site" evidence="5">
    <location>
        <position position="399"/>
    </location>
    <ligand>
        <name>Mg(2+)</name>
        <dbReference type="ChEBI" id="CHEBI:18420"/>
        <label>1</label>
        <note>catalytic</note>
    </ligand>
</feature>
<feature type="binding site" evidence="5">
    <location>
        <position position="399"/>
    </location>
    <ligand>
        <name>Mg(2+)</name>
        <dbReference type="ChEBI" id="CHEBI:18420"/>
        <label>2</label>
        <note>catalytic</note>
    </ligand>
</feature>
<feature type="binding site" evidence="5">
    <location>
        <position position="400"/>
    </location>
    <ligand>
        <name>Mg(2+)</name>
        <dbReference type="ChEBI" id="CHEBI:18420"/>
        <label>2</label>
        <note>catalytic</note>
    </ligand>
</feature>
<feature type="binding site" evidence="2">
    <location>
        <begin position="441"/>
        <end position="443"/>
    </location>
    <ligand>
        <name>ATP</name>
        <dbReference type="ChEBI" id="CHEBI:30616"/>
    </ligand>
</feature>
<feature type="binding site" evidence="5">
    <location>
        <position position="443"/>
    </location>
    <ligand>
        <name>Mg(2+)</name>
        <dbReference type="ChEBI" id="CHEBI:18420"/>
        <label>1</label>
        <note>catalytic</note>
    </ligand>
</feature>
<feature type="binding site" evidence="5">
    <location>
        <position position="443"/>
    </location>
    <ligand>
        <name>Mg(2+)</name>
        <dbReference type="ChEBI" id="CHEBI:18420"/>
        <label>2</label>
        <note>catalytic</note>
    </ligand>
</feature>
<feature type="binding site" evidence="2">
    <location>
        <position position="487"/>
    </location>
    <ligand>
        <name>ATP</name>
        <dbReference type="ChEBI" id="CHEBI:30616"/>
    </ligand>
</feature>
<feature type="binding site" evidence="1">
    <location>
        <position position="1108"/>
    </location>
    <ligand>
        <name>ATP</name>
        <dbReference type="ChEBI" id="CHEBI:30616"/>
    </ligand>
</feature>
<feature type="binding site" evidence="1">
    <location>
        <begin position="1185"/>
        <end position="1187"/>
    </location>
    <ligand>
        <name>ATP</name>
        <dbReference type="ChEBI" id="CHEBI:30616"/>
    </ligand>
</feature>
<feature type="binding site" evidence="1">
    <location>
        <begin position="1192"/>
        <end position="1196"/>
    </location>
    <ligand>
        <name>ATP</name>
        <dbReference type="ChEBI" id="CHEBI:30616"/>
    </ligand>
</feature>
<feature type="binding site" evidence="1">
    <location>
        <position position="1232"/>
    </location>
    <ligand>
        <name>ATP</name>
        <dbReference type="ChEBI" id="CHEBI:30616"/>
    </ligand>
</feature>
<feature type="modified residue" description="Phosphoserine" evidence="3">
    <location>
        <position position="610"/>
    </location>
</feature>
<feature type="modified residue" description="Phosphoserine" evidence="3">
    <location>
        <position position="688"/>
    </location>
</feature>
<feature type="modified residue" description="Phosphoserine" evidence="3">
    <location>
        <position position="691"/>
    </location>
</feature>
<feature type="modified residue" description="Phosphoserine" evidence="20">
    <location>
        <position position="706"/>
    </location>
</feature>
<feature type="modified residue" description="Phosphoserine" evidence="19">
    <location>
        <position position="1257"/>
    </location>
</feature>
<feature type="modified residue" description="Phosphoserine" evidence="17 19">
    <location>
        <position position="1259"/>
    </location>
</feature>
<feature type="modified residue" description="Phosphoserine" evidence="3">
    <location>
        <position position="1295"/>
    </location>
</feature>
<feature type="modified residue" description="Phosphoserine" evidence="18">
    <location>
        <position position="1307"/>
    </location>
</feature>
<feature type="glycosylation site" description="N-linked (GlcNAc...) asparagine" evidence="4">
    <location>
        <position position="206"/>
    </location>
</feature>
<feature type="glycosylation site" description="N-linked (GlcNAc...) asparagine" evidence="4">
    <location>
        <position position="955"/>
    </location>
</feature>
<feature type="glycosylation site" description="N-linked (GlcNAc...) asparagine" evidence="4">
    <location>
        <position position="964"/>
    </location>
</feature>
<feature type="sequence variant" id="VAR_023750" description="Found in 37.5% of the Asian population, in 30% of the Caucasian population and in 16.3% of the African-American population; reduced adenylyl cyclase activity in response to stimulation of the beta-adregnergic receptor by Mn(2+) agonists isoproteronol and NaF; increased albuterol-stimulated adenylyl cyclase activity in the presence of corticosteroid; dbSNP:rs2230739." evidence="8 10">
    <original>I</original>
    <variation>M</variation>
    <location>
        <position position="772"/>
    </location>
</feature>
<feature type="sequence variant" id="VAR_070887" description="In dbSNP:rs61731445." evidence="7 9 11">
    <original>N</original>
    <variation>S</variation>
    <location>
        <position position="1154"/>
    </location>
</feature>
<feature type="sequence conflict" description="In Ref. 4; CAB65084." evidence="16" ref="4">
    <original>G</original>
    <variation>R</variation>
    <location>
        <position position="493"/>
    </location>
</feature>
<feature type="sequence conflict" description="In Ref. 4; CAB65084." evidence="16" ref="4">
    <original>V</original>
    <variation>A</variation>
    <location>
        <position position="884"/>
    </location>
</feature>
<feature type="sequence conflict" description="In Ref. 4; CAB65084." evidence="16" ref="4">
    <original>P</original>
    <variation>R</variation>
    <location>
        <position position="1308"/>
    </location>
</feature>
<comment type="function">
    <text evidence="7 8 10 12">Adenylyl cyclase that catalyzes the formation of the signaling molecule cAMP in response to activation of G protein-coupled receptors (PubMed:10987815, PubMed:12972952, PubMed:15879435, PubMed:9628827). Contributes to signaling cascades activated by CRH (corticotropin-releasing factor), corticosteroids and beta-adrenergic receptors (PubMed:9628827).</text>
</comment>
<comment type="catalytic activity">
    <reaction evidence="7 8 10 12">
        <text>ATP = 3',5'-cyclic AMP + diphosphate</text>
        <dbReference type="Rhea" id="RHEA:15389"/>
        <dbReference type="ChEBI" id="CHEBI:30616"/>
        <dbReference type="ChEBI" id="CHEBI:33019"/>
        <dbReference type="ChEBI" id="CHEBI:58165"/>
        <dbReference type="EC" id="4.6.1.1"/>
    </reaction>
</comment>
<comment type="cofactor">
    <cofactor evidence="2">
        <name>Mg(2+)</name>
        <dbReference type="ChEBI" id="CHEBI:18420"/>
    </cofactor>
    <cofactor evidence="2">
        <name>Mn(2+)</name>
        <dbReference type="ChEBI" id="CHEBI:29035"/>
    </cofactor>
    <text evidence="2">Binds 2 magnesium ions per subunit. Is also active with manganese (in vitro).</text>
</comment>
<comment type="activity regulation">
    <text evidence="7 12">Insensitive to calcium/calmodulin, forskolin and somatostatin. Stimulated by beta-adrenergic receptor activation (PubMed:9628827). Activity is down-regulated by calcium/calcineurin (PubMed:10987815).</text>
</comment>
<comment type="interaction">
    <interactant intactId="EBI-6871081">
        <id>O60503</id>
    </interactant>
    <interactant intactId="EBI-53949969">
        <id>Q8TE99</id>
        <label>PXYLP1</label>
    </interactant>
    <organismsDiffer>false</organismsDiffer>
    <experiments>3</experiments>
</comment>
<comment type="subcellular location">
    <subcellularLocation>
        <location evidence="7 12">Cell membrane</location>
        <topology evidence="16">Multi-pass membrane protein</topology>
    </subcellularLocation>
</comment>
<comment type="tissue specificity">
    <text evidence="7 8 12">Detected in skeletal muscle, pancreas, lung, heart, kidney, liver, brain and placenta (PubMed:10987815, PubMed:9628827). Expressed in multiple cells of the lung, with expression highest in airway smooth muscle (PubMed:12972952).</text>
</comment>
<comment type="domain">
    <text evidence="1">The protein contains two modules with six transmembrane helices each; both are required for catalytic activity. Isolated N-terminal or C-terminal guanylate cyclase domains have no catalytic activity, but when they are brought together, enzyme activity is restored. The active site is at the interface of the two domains. Both contribute substrate-binding residues, but the catalytic metal ions are bound exclusively via the N-terminal guanylate cyclase domain.</text>
</comment>
<comment type="similarity">
    <text evidence="5">Belongs to the adenylyl cyclase class-4/guanylyl cyclase family.</text>
</comment>
<comment type="sequence caution" evidence="16">
    <conflict type="frameshift">
        <sequence resource="EMBL-CDS" id="AAC24201"/>
    </conflict>
</comment>
<comment type="sequence caution" evidence="16">
    <conflict type="erroneous initiation">
        <sequence resource="EMBL-CDS" id="BAA25446"/>
    </conflict>
    <text>Extended N-terminus.</text>
</comment>